<feature type="chain" id="PRO_0000325092" description="Shikimate dehydrogenase (NADP(+))">
    <location>
        <begin position="1"/>
        <end position="282"/>
    </location>
</feature>
<feature type="active site" description="Proton acceptor" evidence="1">
    <location>
        <position position="69"/>
    </location>
</feature>
<feature type="binding site" evidence="1">
    <location>
        <begin position="18"/>
        <end position="20"/>
    </location>
    <ligand>
        <name>shikimate</name>
        <dbReference type="ChEBI" id="CHEBI:36208"/>
    </ligand>
</feature>
<feature type="binding site" evidence="1">
    <location>
        <position position="65"/>
    </location>
    <ligand>
        <name>shikimate</name>
        <dbReference type="ChEBI" id="CHEBI:36208"/>
    </ligand>
</feature>
<feature type="binding site" evidence="1">
    <location>
        <position position="81"/>
    </location>
    <ligand>
        <name>NADP(+)</name>
        <dbReference type="ChEBI" id="CHEBI:58349"/>
    </ligand>
</feature>
<feature type="binding site" evidence="1">
    <location>
        <position position="90"/>
    </location>
    <ligand>
        <name>shikimate</name>
        <dbReference type="ChEBI" id="CHEBI:36208"/>
    </ligand>
</feature>
<feature type="binding site" evidence="1">
    <location>
        <position position="105"/>
    </location>
    <ligand>
        <name>shikimate</name>
        <dbReference type="ChEBI" id="CHEBI:36208"/>
    </ligand>
</feature>
<feature type="binding site" evidence="1">
    <location>
        <begin position="130"/>
        <end position="134"/>
    </location>
    <ligand>
        <name>NADP(+)</name>
        <dbReference type="ChEBI" id="CHEBI:58349"/>
    </ligand>
</feature>
<feature type="binding site" evidence="1">
    <location>
        <begin position="154"/>
        <end position="159"/>
    </location>
    <ligand>
        <name>NADP(+)</name>
        <dbReference type="ChEBI" id="CHEBI:58349"/>
    </ligand>
</feature>
<feature type="binding site" evidence="1">
    <location>
        <position position="222"/>
    </location>
    <ligand>
        <name>NADP(+)</name>
        <dbReference type="ChEBI" id="CHEBI:58349"/>
    </ligand>
</feature>
<feature type="binding site" evidence="1">
    <location>
        <position position="224"/>
    </location>
    <ligand>
        <name>shikimate</name>
        <dbReference type="ChEBI" id="CHEBI:36208"/>
    </ligand>
</feature>
<feature type="binding site" evidence="1">
    <location>
        <position position="245"/>
    </location>
    <ligand>
        <name>NADP(+)</name>
        <dbReference type="ChEBI" id="CHEBI:58349"/>
    </ligand>
</feature>
<dbReference type="EC" id="1.1.1.25" evidence="1"/>
<dbReference type="EMBL" id="CP000539">
    <property type="protein sequence ID" value="ABM43767.1"/>
    <property type="molecule type" value="Genomic_DNA"/>
</dbReference>
<dbReference type="SMR" id="A1WBZ2"/>
<dbReference type="STRING" id="232721.Ajs_3656"/>
<dbReference type="KEGG" id="ajs:Ajs_3656"/>
<dbReference type="eggNOG" id="COG0169">
    <property type="taxonomic scope" value="Bacteria"/>
</dbReference>
<dbReference type="HOGENOM" id="CLU_044063_2_1_4"/>
<dbReference type="UniPathway" id="UPA00053">
    <property type="reaction ID" value="UER00087"/>
</dbReference>
<dbReference type="Proteomes" id="UP000000645">
    <property type="component" value="Chromosome"/>
</dbReference>
<dbReference type="GO" id="GO:0005829">
    <property type="term" value="C:cytosol"/>
    <property type="evidence" value="ECO:0007669"/>
    <property type="project" value="TreeGrafter"/>
</dbReference>
<dbReference type="GO" id="GO:0050661">
    <property type="term" value="F:NADP binding"/>
    <property type="evidence" value="ECO:0007669"/>
    <property type="project" value="InterPro"/>
</dbReference>
<dbReference type="GO" id="GO:0004764">
    <property type="term" value="F:shikimate 3-dehydrogenase (NADP+) activity"/>
    <property type="evidence" value="ECO:0007669"/>
    <property type="project" value="UniProtKB-UniRule"/>
</dbReference>
<dbReference type="GO" id="GO:0008652">
    <property type="term" value="P:amino acid biosynthetic process"/>
    <property type="evidence" value="ECO:0007669"/>
    <property type="project" value="UniProtKB-KW"/>
</dbReference>
<dbReference type="GO" id="GO:0009073">
    <property type="term" value="P:aromatic amino acid family biosynthetic process"/>
    <property type="evidence" value="ECO:0007669"/>
    <property type="project" value="UniProtKB-KW"/>
</dbReference>
<dbReference type="GO" id="GO:0009423">
    <property type="term" value="P:chorismate biosynthetic process"/>
    <property type="evidence" value="ECO:0007669"/>
    <property type="project" value="UniProtKB-UniRule"/>
</dbReference>
<dbReference type="GO" id="GO:0019632">
    <property type="term" value="P:shikimate metabolic process"/>
    <property type="evidence" value="ECO:0007669"/>
    <property type="project" value="InterPro"/>
</dbReference>
<dbReference type="CDD" id="cd01065">
    <property type="entry name" value="NAD_bind_Shikimate_DH"/>
    <property type="match status" value="1"/>
</dbReference>
<dbReference type="FunFam" id="3.40.50.10860:FF:000006">
    <property type="entry name" value="Shikimate dehydrogenase (NADP(+))"/>
    <property type="match status" value="1"/>
</dbReference>
<dbReference type="Gene3D" id="3.40.50.10860">
    <property type="entry name" value="Leucine Dehydrogenase, chain A, domain 1"/>
    <property type="match status" value="1"/>
</dbReference>
<dbReference type="Gene3D" id="3.40.50.720">
    <property type="entry name" value="NAD(P)-binding Rossmann-like Domain"/>
    <property type="match status" value="1"/>
</dbReference>
<dbReference type="HAMAP" id="MF_00222">
    <property type="entry name" value="Shikimate_DH_AroE"/>
    <property type="match status" value="1"/>
</dbReference>
<dbReference type="InterPro" id="IPR046346">
    <property type="entry name" value="Aminoacid_DH-like_N_sf"/>
</dbReference>
<dbReference type="InterPro" id="IPR036291">
    <property type="entry name" value="NAD(P)-bd_dom_sf"/>
</dbReference>
<dbReference type="InterPro" id="IPR041121">
    <property type="entry name" value="SDH_C"/>
</dbReference>
<dbReference type="InterPro" id="IPR011342">
    <property type="entry name" value="Shikimate_DH"/>
</dbReference>
<dbReference type="InterPro" id="IPR013708">
    <property type="entry name" value="Shikimate_DH-bd_N"/>
</dbReference>
<dbReference type="InterPro" id="IPR022893">
    <property type="entry name" value="Shikimate_DH_fam"/>
</dbReference>
<dbReference type="InterPro" id="IPR006151">
    <property type="entry name" value="Shikm_DH/Glu-tRNA_Rdtase"/>
</dbReference>
<dbReference type="NCBIfam" id="TIGR00507">
    <property type="entry name" value="aroE"/>
    <property type="match status" value="1"/>
</dbReference>
<dbReference type="NCBIfam" id="NF001310">
    <property type="entry name" value="PRK00258.1-2"/>
    <property type="match status" value="1"/>
</dbReference>
<dbReference type="PANTHER" id="PTHR21089:SF1">
    <property type="entry name" value="BIFUNCTIONAL 3-DEHYDROQUINATE DEHYDRATASE_SHIKIMATE DEHYDROGENASE, CHLOROPLASTIC"/>
    <property type="match status" value="1"/>
</dbReference>
<dbReference type="PANTHER" id="PTHR21089">
    <property type="entry name" value="SHIKIMATE DEHYDROGENASE"/>
    <property type="match status" value="1"/>
</dbReference>
<dbReference type="Pfam" id="PF18317">
    <property type="entry name" value="SDH_C"/>
    <property type="match status" value="1"/>
</dbReference>
<dbReference type="Pfam" id="PF01488">
    <property type="entry name" value="Shikimate_DH"/>
    <property type="match status" value="1"/>
</dbReference>
<dbReference type="Pfam" id="PF08501">
    <property type="entry name" value="Shikimate_dh_N"/>
    <property type="match status" value="1"/>
</dbReference>
<dbReference type="SUPFAM" id="SSF53223">
    <property type="entry name" value="Aminoacid dehydrogenase-like, N-terminal domain"/>
    <property type="match status" value="1"/>
</dbReference>
<dbReference type="SUPFAM" id="SSF51735">
    <property type="entry name" value="NAD(P)-binding Rossmann-fold domains"/>
    <property type="match status" value="1"/>
</dbReference>
<keyword id="KW-0028">Amino-acid biosynthesis</keyword>
<keyword id="KW-0057">Aromatic amino acid biosynthesis</keyword>
<keyword id="KW-0521">NADP</keyword>
<keyword id="KW-0560">Oxidoreductase</keyword>
<organism>
    <name type="scientific">Acidovorax sp. (strain JS42)</name>
    <dbReference type="NCBI Taxonomy" id="232721"/>
    <lineage>
        <taxon>Bacteria</taxon>
        <taxon>Pseudomonadati</taxon>
        <taxon>Pseudomonadota</taxon>
        <taxon>Betaproteobacteria</taxon>
        <taxon>Burkholderiales</taxon>
        <taxon>Comamonadaceae</taxon>
        <taxon>Acidovorax</taxon>
    </lineage>
</organism>
<proteinExistence type="inferred from homology"/>
<name>AROE_ACISJ</name>
<sequence>MTAAADLYCVMGNPIAHSRSPWIHARFAQLTGQSLHYERRLVPLDGFAQALQSFAAEGGRGCNITVPFKLEAAQLATTRSERVQLAGAANTLVFDGGSIHADNTDGLGLVADITQGAGVPLAGRDVLLVGAGGAAAGVLGPLLRQHPRRIAVVNRTPARAQALVDSHAALAALQKTELLALDMQAPGADFDVIINATASSLEGGPVPVPASVLRPGSLAYDMMYGPAAQPFLDWATGHGATARDGLGMLVEQAAEAFLLWRGVRPPSAPVLQELRAAIAAGA</sequence>
<gene>
    <name evidence="1" type="primary">aroE</name>
    <name type="ordered locus">Ajs_3656</name>
</gene>
<accession>A1WBZ2</accession>
<protein>
    <recommendedName>
        <fullName evidence="1">Shikimate dehydrogenase (NADP(+))</fullName>
        <shortName evidence="1">SDH</shortName>
        <ecNumber evidence="1">1.1.1.25</ecNumber>
    </recommendedName>
</protein>
<reference key="1">
    <citation type="submission" date="2006-12" db="EMBL/GenBank/DDBJ databases">
        <title>Complete sequence of chromosome 1 of Acidovorax sp. JS42.</title>
        <authorList>
            <person name="Copeland A."/>
            <person name="Lucas S."/>
            <person name="Lapidus A."/>
            <person name="Barry K."/>
            <person name="Detter J.C."/>
            <person name="Glavina del Rio T."/>
            <person name="Dalin E."/>
            <person name="Tice H."/>
            <person name="Pitluck S."/>
            <person name="Chertkov O."/>
            <person name="Brettin T."/>
            <person name="Bruce D."/>
            <person name="Han C."/>
            <person name="Tapia R."/>
            <person name="Gilna P."/>
            <person name="Schmutz J."/>
            <person name="Larimer F."/>
            <person name="Land M."/>
            <person name="Hauser L."/>
            <person name="Kyrpides N."/>
            <person name="Kim E."/>
            <person name="Stahl D."/>
            <person name="Richardson P."/>
        </authorList>
    </citation>
    <scope>NUCLEOTIDE SEQUENCE [LARGE SCALE GENOMIC DNA]</scope>
    <source>
        <strain>JS42</strain>
    </source>
</reference>
<comment type="function">
    <text evidence="1">Involved in the biosynthesis of the chorismate, which leads to the biosynthesis of aromatic amino acids. Catalyzes the reversible NADPH linked reduction of 3-dehydroshikimate (DHSA) to yield shikimate (SA).</text>
</comment>
<comment type="catalytic activity">
    <reaction evidence="1">
        <text>shikimate + NADP(+) = 3-dehydroshikimate + NADPH + H(+)</text>
        <dbReference type="Rhea" id="RHEA:17737"/>
        <dbReference type="ChEBI" id="CHEBI:15378"/>
        <dbReference type="ChEBI" id="CHEBI:16630"/>
        <dbReference type="ChEBI" id="CHEBI:36208"/>
        <dbReference type="ChEBI" id="CHEBI:57783"/>
        <dbReference type="ChEBI" id="CHEBI:58349"/>
        <dbReference type="EC" id="1.1.1.25"/>
    </reaction>
</comment>
<comment type="pathway">
    <text evidence="1">Metabolic intermediate biosynthesis; chorismate biosynthesis; chorismate from D-erythrose 4-phosphate and phosphoenolpyruvate: step 4/7.</text>
</comment>
<comment type="subunit">
    <text evidence="1">Homodimer.</text>
</comment>
<comment type="similarity">
    <text evidence="1">Belongs to the shikimate dehydrogenase family.</text>
</comment>
<evidence type="ECO:0000255" key="1">
    <source>
        <dbReference type="HAMAP-Rule" id="MF_00222"/>
    </source>
</evidence>